<keyword id="KW-1015">Disulfide bond</keyword>
<keyword id="KW-0378">Hydrolase</keyword>
<keyword id="KW-0645">Protease</keyword>
<keyword id="KW-1267">Proteomics identification</keyword>
<keyword id="KW-1185">Reference proteome</keyword>
<keyword id="KW-0964">Secreted</keyword>
<keyword id="KW-0720">Serine protease</keyword>
<keyword id="KW-0732">Signal</keyword>
<organism>
    <name type="scientific">Homo sapiens</name>
    <name type="common">Human</name>
    <dbReference type="NCBI Taxonomy" id="9606"/>
    <lineage>
        <taxon>Eukaryota</taxon>
        <taxon>Metazoa</taxon>
        <taxon>Chordata</taxon>
        <taxon>Craniata</taxon>
        <taxon>Vertebrata</taxon>
        <taxon>Euteleostomi</taxon>
        <taxon>Mammalia</taxon>
        <taxon>Eutheria</taxon>
        <taxon>Euarchontoglires</taxon>
        <taxon>Primates</taxon>
        <taxon>Haplorrhini</taxon>
        <taxon>Catarrhini</taxon>
        <taxon>Hominidae</taxon>
        <taxon>Homo</taxon>
    </lineage>
</organism>
<evidence type="ECO:0000250" key="1"/>
<evidence type="ECO:0000255" key="2"/>
<evidence type="ECO:0000255" key="3">
    <source>
        <dbReference type="PROSITE-ProRule" id="PRU00143"/>
    </source>
</evidence>
<evidence type="ECO:0000255" key="4">
    <source>
        <dbReference type="PROSITE-ProRule" id="PRU00653"/>
    </source>
</evidence>
<evidence type="ECO:0000255" key="5">
    <source>
        <dbReference type="PROSITE-ProRule" id="PRU00798"/>
    </source>
</evidence>
<evidence type="ECO:0000305" key="6"/>
<feature type="signal peptide" evidence="2">
    <location>
        <begin position="1"/>
        <end position="31"/>
    </location>
</feature>
<feature type="chain" id="PRO_0000026951" description="Serine protease HTRA4">
    <location>
        <begin position="32"/>
        <end position="476"/>
    </location>
</feature>
<feature type="domain" description="IGFBP N-terminal" evidence="4">
    <location>
        <begin position="36"/>
        <end position="109"/>
    </location>
</feature>
<feature type="domain" description="Kazal-like" evidence="5">
    <location>
        <begin position="88"/>
        <end position="154"/>
    </location>
</feature>
<feature type="domain" description="PDZ" evidence="3">
    <location>
        <begin position="383"/>
        <end position="474"/>
    </location>
</feature>
<feature type="region of interest" description="Serine protease">
    <location>
        <begin position="202"/>
        <end position="362"/>
    </location>
</feature>
<feature type="active site" description="Charge relay system" evidence="2">
    <location>
        <position position="218"/>
    </location>
</feature>
<feature type="active site" description="Charge relay system" evidence="2">
    <location>
        <position position="248"/>
    </location>
</feature>
<feature type="active site" description="Charge relay system" evidence="2">
    <location>
        <position position="326"/>
    </location>
</feature>
<feature type="disulfide bond" evidence="4">
    <location>
        <begin position="40"/>
        <end position="66"/>
    </location>
</feature>
<feature type="disulfide bond" evidence="4">
    <location>
        <begin position="44"/>
        <end position="68"/>
    </location>
</feature>
<feature type="disulfide bond" evidence="4">
    <location>
        <begin position="49"/>
        <end position="69"/>
    </location>
</feature>
<feature type="disulfide bond" evidence="4">
    <location>
        <begin position="55"/>
        <end position="72"/>
    </location>
</feature>
<feature type="disulfide bond" evidence="4">
    <location>
        <begin position="80"/>
        <end position="94"/>
    </location>
</feature>
<feature type="disulfide bond" evidence="4">
    <location>
        <begin position="88"/>
        <end position="106"/>
    </location>
</feature>
<feature type="disulfide bond" evidence="5">
    <location>
        <begin position="108"/>
        <end position="127"/>
    </location>
</feature>
<feature type="disulfide bond" evidence="5">
    <location>
        <begin position="116"/>
        <end position="152"/>
    </location>
</feature>
<feature type="sequence conflict" description="In Ref. 2; AAH57765." evidence="6" ref="2">
    <original>V</original>
    <variation>F</variation>
    <location>
        <position position="416"/>
    </location>
</feature>
<reference key="1">
    <citation type="journal article" date="2004" name="Nat. Genet.">
        <title>Complete sequencing and characterization of 21,243 full-length human cDNAs.</title>
        <authorList>
            <person name="Ota T."/>
            <person name="Suzuki Y."/>
            <person name="Nishikawa T."/>
            <person name="Otsuki T."/>
            <person name="Sugiyama T."/>
            <person name="Irie R."/>
            <person name="Wakamatsu A."/>
            <person name="Hayashi K."/>
            <person name="Sato H."/>
            <person name="Nagai K."/>
            <person name="Kimura K."/>
            <person name="Makita H."/>
            <person name="Sekine M."/>
            <person name="Obayashi M."/>
            <person name="Nishi T."/>
            <person name="Shibahara T."/>
            <person name="Tanaka T."/>
            <person name="Ishii S."/>
            <person name="Yamamoto J."/>
            <person name="Saito K."/>
            <person name="Kawai Y."/>
            <person name="Isono Y."/>
            <person name="Nakamura Y."/>
            <person name="Nagahari K."/>
            <person name="Murakami K."/>
            <person name="Yasuda T."/>
            <person name="Iwayanagi T."/>
            <person name="Wagatsuma M."/>
            <person name="Shiratori A."/>
            <person name="Sudo H."/>
            <person name="Hosoiri T."/>
            <person name="Kaku Y."/>
            <person name="Kodaira H."/>
            <person name="Kondo H."/>
            <person name="Sugawara M."/>
            <person name="Takahashi M."/>
            <person name="Kanda K."/>
            <person name="Yokoi T."/>
            <person name="Furuya T."/>
            <person name="Kikkawa E."/>
            <person name="Omura Y."/>
            <person name="Abe K."/>
            <person name="Kamihara K."/>
            <person name="Katsuta N."/>
            <person name="Sato K."/>
            <person name="Tanikawa M."/>
            <person name="Yamazaki M."/>
            <person name="Ninomiya K."/>
            <person name="Ishibashi T."/>
            <person name="Yamashita H."/>
            <person name="Murakawa K."/>
            <person name="Fujimori K."/>
            <person name="Tanai H."/>
            <person name="Kimata M."/>
            <person name="Watanabe M."/>
            <person name="Hiraoka S."/>
            <person name="Chiba Y."/>
            <person name="Ishida S."/>
            <person name="Ono Y."/>
            <person name="Takiguchi S."/>
            <person name="Watanabe S."/>
            <person name="Yosida M."/>
            <person name="Hotuta T."/>
            <person name="Kusano J."/>
            <person name="Kanehori K."/>
            <person name="Takahashi-Fujii A."/>
            <person name="Hara H."/>
            <person name="Tanase T.-O."/>
            <person name="Nomura Y."/>
            <person name="Togiya S."/>
            <person name="Komai F."/>
            <person name="Hara R."/>
            <person name="Takeuchi K."/>
            <person name="Arita M."/>
            <person name="Imose N."/>
            <person name="Musashino K."/>
            <person name="Yuuki H."/>
            <person name="Oshima A."/>
            <person name="Sasaki N."/>
            <person name="Aotsuka S."/>
            <person name="Yoshikawa Y."/>
            <person name="Matsunawa H."/>
            <person name="Ichihara T."/>
            <person name="Shiohata N."/>
            <person name="Sano S."/>
            <person name="Moriya S."/>
            <person name="Momiyama H."/>
            <person name="Satoh N."/>
            <person name="Takami S."/>
            <person name="Terashima Y."/>
            <person name="Suzuki O."/>
            <person name="Nakagawa S."/>
            <person name="Senoh A."/>
            <person name="Mizoguchi H."/>
            <person name="Goto Y."/>
            <person name="Shimizu F."/>
            <person name="Wakebe H."/>
            <person name="Hishigaki H."/>
            <person name="Watanabe T."/>
            <person name="Sugiyama A."/>
            <person name="Takemoto M."/>
            <person name="Kawakami B."/>
            <person name="Yamazaki M."/>
            <person name="Watanabe K."/>
            <person name="Kumagai A."/>
            <person name="Itakura S."/>
            <person name="Fukuzumi Y."/>
            <person name="Fujimori Y."/>
            <person name="Komiyama M."/>
            <person name="Tashiro H."/>
            <person name="Tanigami A."/>
            <person name="Fujiwara T."/>
            <person name="Ono T."/>
            <person name="Yamada K."/>
            <person name="Fujii Y."/>
            <person name="Ozaki K."/>
            <person name="Hirao M."/>
            <person name="Ohmori Y."/>
            <person name="Kawabata A."/>
            <person name="Hikiji T."/>
            <person name="Kobatake N."/>
            <person name="Inagaki H."/>
            <person name="Ikema Y."/>
            <person name="Okamoto S."/>
            <person name="Okitani R."/>
            <person name="Kawakami T."/>
            <person name="Noguchi S."/>
            <person name="Itoh T."/>
            <person name="Shigeta K."/>
            <person name="Senba T."/>
            <person name="Matsumura K."/>
            <person name="Nakajima Y."/>
            <person name="Mizuno T."/>
            <person name="Morinaga M."/>
            <person name="Sasaki M."/>
            <person name="Togashi T."/>
            <person name="Oyama M."/>
            <person name="Hata H."/>
            <person name="Watanabe M."/>
            <person name="Komatsu T."/>
            <person name="Mizushima-Sugano J."/>
            <person name="Satoh T."/>
            <person name="Shirai Y."/>
            <person name="Takahashi Y."/>
            <person name="Nakagawa K."/>
            <person name="Okumura K."/>
            <person name="Nagase T."/>
            <person name="Nomura N."/>
            <person name="Kikuchi H."/>
            <person name="Masuho Y."/>
            <person name="Yamashita R."/>
            <person name="Nakai K."/>
            <person name="Yada T."/>
            <person name="Nakamura Y."/>
            <person name="Ohara O."/>
            <person name="Isogai T."/>
            <person name="Sugano S."/>
        </authorList>
    </citation>
    <scope>NUCLEOTIDE SEQUENCE [LARGE SCALE MRNA]</scope>
    <source>
        <tissue>Placenta</tissue>
    </source>
</reference>
<reference key="2">
    <citation type="journal article" date="2006" name="Nature">
        <title>DNA sequence and analysis of human chromosome 8.</title>
        <authorList>
            <person name="Nusbaum C."/>
            <person name="Mikkelsen T.S."/>
            <person name="Zody M.C."/>
            <person name="Asakawa S."/>
            <person name="Taudien S."/>
            <person name="Garber M."/>
            <person name="Kodira C.D."/>
            <person name="Schueler M.G."/>
            <person name="Shimizu A."/>
            <person name="Whittaker C.A."/>
            <person name="Chang J.L."/>
            <person name="Cuomo C.A."/>
            <person name="Dewar K."/>
            <person name="FitzGerald M.G."/>
            <person name="Yang X."/>
            <person name="Allen N.R."/>
            <person name="Anderson S."/>
            <person name="Asakawa T."/>
            <person name="Blechschmidt K."/>
            <person name="Bloom T."/>
            <person name="Borowsky M.L."/>
            <person name="Butler J."/>
            <person name="Cook A."/>
            <person name="Corum B."/>
            <person name="DeArellano K."/>
            <person name="DeCaprio D."/>
            <person name="Dooley K.T."/>
            <person name="Dorris L. III"/>
            <person name="Engels R."/>
            <person name="Gloeckner G."/>
            <person name="Hafez N."/>
            <person name="Hagopian D.S."/>
            <person name="Hall J.L."/>
            <person name="Ishikawa S.K."/>
            <person name="Jaffe D.B."/>
            <person name="Kamat A."/>
            <person name="Kudoh J."/>
            <person name="Lehmann R."/>
            <person name="Lokitsang T."/>
            <person name="Macdonald P."/>
            <person name="Major J.E."/>
            <person name="Matthews C.D."/>
            <person name="Mauceli E."/>
            <person name="Menzel U."/>
            <person name="Mihalev A.H."/>
            <person name="Minoshima S."/>
            <person name="Murayama Y."/>
            <person name="Naylor J.W."/>
            <person name="Nicol R."/>
            <person name="Nguyen C."/>
            <person name="O'Leary S.B."/>
            <person name="O'Neill K."/>
            <person name="Parker S.C.J."/>
            <person name="Polley A."/>
            <person name="Raymond C.K."/>
            <person name="Reichwald K."/>
            <person name="Rodriguez J."/>
            <person name="Sasaki T."/>
            <person name="Schilhabel M."/>
            <person name="Siddiqui R."/>
            <person name="Smith C.L."/>
            <person name="Sneddon T.P."/>
            <person name="Talamas J.A."/>
            <person name="Tenzin P."/>
            <person name="Topham K."/>
            <person name="Venkataraman V."/>
            <person name="Wen G."/>
            <person name="Yamazaki S."/>
            <person name="Young S.K."/>
            <person name="Zeng Q."/>
            <person name="Zimmer A.R."/>
            <person name="Rosenthal A."/>
            <person name="Birren B.W."/>
            <person name="Platzer M."/>
            <person name="Shimizu N."/>
            <person name="Lander E.S."/>
        </authorList>
    </citation>
    <scope>NUCLEOTIDE SEQUENCE [LARGE SCALE GENOMIC DNA]</scope>
</reference>
<reference key="3">
    <citation type="journal article" date="2004" name="Genome Res.">
        <title>The status, quality, and expansion of the NIH full-length cDNA project: the Mammalian Gene Collection (MGC).</title>
        <authorList>
            <consortium name="The MGC Project Team"/>
        </authorList>
    </citation>
    <scope>NUCLEOTIDE SEQUENCE [LARGE SCALE MRNA]</scope>
    <source>
        <tissue>Placenta</tissue>
    </source>
</reference>
<reference key="4">
    <citation type="submission" date="2001-08" db="UniProtKB">
        <authorList>
            <person name="Southan C."/>
        </authorList>
    </citation>
    <scope>IDENTIFICATION</scope>
</reference>
<accession>P83105</accession>
<accession>Q542Z4</accession>
<accession>Q6PF13</accession>
<dbReference type="EC" id="3.4.21.-"/>
<dbReference type="EMBL" id="AK075205">
    <property type="protein sequence ID" value="BAC11470.1"/>
    <property type="molecule type" value="mRNA"/>
</dbReference>
<dbReference type="EMBL" id="AC108863">
    <property type="status" value="NOT_ANNOTATED_CDS"/>
    <property type="molecule type" value="Genomic_DNA"/>
</dbReference>
<dbReference type="EMBL" id="BC057765">
    <property type="protein sequence ID" value="AAH57765.1"/>
    <property type="molecule type" value="mRNA"/>
</dbReference>
<dbReference type="CCDS" id="CCDS6110.1"/>
<dbReference type="RefSeq" id="NP_710159.1">
    <property type="nucleotide sequence ID" value="NM_153692.4"/>
</dbReference>
<dbReference type="SMR" id="P83105"/>
<dbReference type="BioGRID" id="128450">
    <property type="interactions" value="184"/>
</dbReference>
<dbReference type="FunCoup" id="P83105">
    <property type="interactions" value="49"/>
</dbReference>
<dbReference type="IntAct" id="P83105">
    <property type="interactions" value="185"/>
</dbReference>
<dbReference type="STRING" id="9606.ENSP00000305919"/>
<dbReference type="MEROPS" id="S01.285"/>
<dbReference type="iPTMnet" id="P83105"/>
<dbReference type="PhosphoSitePlus" id="P83105"/>
<dbReference type="BioMuta" id="HTRA4"/>
<dbReference type="DMDM" id="17366421"/>
<dbReference type="jPOST" id="P83105"/>
<dbReference type="MassIVE" id="P83105"/>
<dbReference type="PaxDb" id="9606-ENSP00000305919"/>
<dbReference type="PeptideAtlas" id="P83105"/>
<dbReference type="ProteomicsDB" id="57730"/>
<dbReference type="Antibodypedia" id="23738">
    <property type="antibodies" value="105 antibodies from 19 providers"/>
</dbReference>
<dbReference type="DNASU" id="203100"/>
<dbReference type="Ensembl" id="ENST00000302495.5">
    <property type="protein sequence ID" value="ENSP00000305919.4"/>
    <property type="gene ID" value="ENSG00000169495.5"/>
</dbReference>
<dbReference type="GeneID" id="203100"/>
<dbReference type="KEGG" id="hsa:203100"/>
<dbReference type="MANE-Select" id="ENST00000302495.5">
    <property type="protein sequence ID" value="ENSP00000305919.4"/>
    <property type="RefSeq nucleotide sequence ID" value="NM_153692.4"/>
    <property type="RefSeq protein sequence ID" value="NP_710159.1"/>
</dbReference>
<dbReference type="UCSC" id="uc003xmj.4">
    <property type="organism name" value="human"/>
</dbReference>
<dbReference type="AGR" id="HGNC:26909"/>
<dbReference type="CTD" id="203100"/>
<dbReference type="DisGeNET" id="203100"/>
<dbReference type="GeneCards" id="HTRA4"/>
<dbReference type="HGNC" id="HGNC:26909">
    <property type="gene designation" value="HTRA4"/>
</dbReference>
<dbReference type="HPA" id="ENSG00000169495">
    <property type="expression patterns" value="Tissue enriched (placenta)"/>
</dbReference>
<dbReference type="MIM" id="610700">
    <property type="type" value="gene"/>
</dbReference>
<dbReference type="neXtProt" id="NX_P83105"/>
<dbReference type="OpenTargets" id="ENSG00000169495"/>
<dbReference type="PharmGKB" id="PA134862039"/>
<dbReference type="VEuPathDB" id="HostDB:ENSG00000169495"/>
<dbReference type="eggNOG" id="ENOG502RMZV">
    <property type="taxonomic scope" value="Eukaryota"/>
</dbReference>
<dbReference type="GeneTree" id="ENSGT00940000160760"/>
<dbReference type="HOGENOM" id="CLU_020120_6_2_1"/>
<dbReference type="InParanoid" id="P83105"/>
<dbReference type="OMA" id="WIEVVLQ"/>
<dbReference type="OrthoDB" id="4217619at2759"/>
<dbReference type="PAN-GO" id="P83105">
    <property type="GO annotations" value="4 GO annotations based on evolutionary models"/>
</dbReference>
<dbReference type="PhylomeDB" id="P83105"/>
<dbReference type="TreeFam" id="TF323480"/>
<dbReference type="BRENDA" id="3.4.21.107">
    <property type="organism ID" value="2681"/>
</dbReference>
<dbReference type="PathwayCommons" id="P83105"/>
<dbReference type="SignaLink" id="P83105"/>
<dbReference type="BioGRID-ORCS" id="203100">
    <property type="hits" value="11 hits in 1148 CRISPR screens"/>
</dbReference>
<dbReference type="GenomeRNAi" id="203100"/>
<dbReference type="Pharos" id="P83105">
    <property type="development level" value="Tbio"/>
</dbReference>
<dbReference type="PRO" id="PR:P83105"/>
<dbReference type="Proteomes" id="UP000005640">
    <property type="component" value="Chromosome 8"/>
</dbReference>
<dbReference type="RNAct" id="P83105">
    <property type="molecule type" value="protein"/>
</dbReference>
<dbReference type="Bgee" id="ENSG00000169495">
    <property type="expression patterns" value="Expressed in decidua and 82 other cell types or tissues"/>
</dbReference>
<dbReference type="GO" id="GO:0005576">
    <property type="term" value="C:extracellular region"/>
    <property type="evidence" value="ECO:0007669"/>
    <property type="project" value="UniProtKB-SubCell"/>
</dbReference>
<dbReference type="GO" id="GO:0004175">
    <property type="term" value="F:endopeptidase activity"/>
    <property type="evidence" value="ECO:0000314"/>
    <property type="project" value="BHF-UCL"/>
</dbReference>
<dbReference type="GO" id="GO:0042802">
    <property type="term" value="F:identical protein binding"/>
    <property type="evidence" value="ECO:0000353"/>
    <property type="project" value="IntAct"/>
</dbReference>
<dbReference type="GO" id="GO:0004252">
    <property type="term" value="F:serine-type endopeptidase activity"/>
    <property type="evidence" value="ECO:0000318"/>
    <property type="project" value="GO_Central"/>
</dbReference>
<dbReference type="GO" id="GO:0030512">
    <property type="term" value="P:negative regulation of transforming growth factor beta receptor signaling pathway"/>
    <property type="evidence" value="ECO:0000250"/>
    <property type="project" value="UniProtKB"/>
</dbReference>
<dbReference type="GO" id="GO:0043065">
    <property type="term" value="P:positive regulation of apoptotic process"/>
    <property type="evidence" value="ECO:0000318"/>
    <property type="project" value="GO_Central"/>
</dbReference>
<dbReference type="GO" id="GO:0012501">
    <property type="term" value="P:programmed cell death"/>
    <property type="evidence" value="ECO:0000318"/>
    <property type="project" value="GO_Central"/>
</dbReference>
<dbReference type="GO" id="GO:0006508">
    <property type="term" value="P:proteolysis"/>
    <property type="evidence" value="ECO:0000314"/>
    <property type="project" value="BHF-UCL"/>
</dbReference>
<dbReference type="CDD" id="cd06785">
    <property type="entry name" value="cpPDZ_HtrA-like"/>
    <property type="match status" value="1"/>
</dbReference>
<dbReference type="CDD" id="cd00104">
    <property type="entry name" value="KAZAL_FS"/>
    <property type="match status" value="1"/>
</dbReference>
<dbReference type="FunFam" id="2.40.10.120:FF:000002">
    <property type="entry name" value="HtrA serine peptidase 3"/>
    <property type="match status" value="1"/>
</dbReference>
<dbReference type="FunFam" id="3.30.60.30:FF:000098">
    <property type="entry name" value="Serine protease HTRA4"/>
    <property type="match status" value="1"/>
</dbReference>
<dbReference type="Gene3D" id="2.30.42.10">
    <property type="match status" value="1"/>
</dbReference>
<dbReference type="Gene3D" id="2.40.10.120">
    <property type="match status" value="1"/>
</dbReference>
<dbReference type="Gene3D" id="3.30.60.30">
    <property type="match status" value="1"/>
</dbReference>
<dbReference type="Gene3D" id="4.10.40.20">
    <property type="match status" value="1"/>
</dbReference>
<dbReference type="InterPro" id="IPR009030">
    <property type="entry name" value="Growth_fac_rcpt_cys_sf"/>
</dbReference>
<dbReference type="InterPro" id="IPR000867">
    <property type="entry name" value="IGFBP-like"/>
</dbReference>
<dbReference type="InterPro" id="IPR002350">
    <property type="entry name" value="Kazal_dom"/>
</dbReference>
<dbReference type="InterPro" id="IPR036058">
    <property type="entry name" value="Kazal_dom_sf"/>
</dbReference>
<dbReference type="InterPro" id="IPR001478">
    <property type="entry name" value="PDZ"/>
</dbReference>
<dbReference type="InterPro" id="IPR036034">
    <property type="entry name" value="PDZ_sf"/>
</dbReference>
<dbReference type="InterPro" id="IPR009003">
    <property type="entry name" value="Peptidase_S1_PA"/>
</dbReference>
<dbReference type="InterPro" id="IPR001940">
    <property type="entry name" value="Peptidase_S1C"/>
</dbReference>
<dbReference type="PANTHER" id="PTHR22939">
    <property type="entry name" value="SERINE PROTEASE FAMILY S1C HTRA-RELATED"/>
    <property type="match status" value="1"/>
</dbReference>
<dbReference type="PANTHER" id="PTHR22939:SF105">
    <property type="entry name" value="SERINE PROTEASE HTRA4"/>
    <property type="match status" value="1"/>
</dbReference>
<dbReference type="Pfam" id="PF00219">
    <property type="entry name" value="IGFBP"/>
    <property type="match status" value="1"/>
</dbReference>
<dbReference type="Pfam" id="PF07648">
    <property type="entry name" value="Kazal_2"/>
    <property type="match status" value="1"/>
</dbReference>
<dbReference type="Pfam" id="PF13180">
    <property type="entry name" value="PDZ_2"/>
    <property type="match status" value="1"/>
</dbReference>
<dbReference type="Pfam" id="PF13365">
    <property type="entry name" value="Trypsin_2"/>
    <property type="match status" value="1"/>
</dbReference>
<dbReference type="PRINTS" id="PR00834">
    <property type="entry name" value="PROTEASES2C"/>
</dbReference>
<dbReference type="SMART" id="SM00280">
    <property type="entry name" value="KAZAL"/>
    <property type="match status" value="1"/>
</dbReference>
<dbReference type="SMART" id="SM00228">
    <property type="entry name" value="PDZ"/>
    <property type="match status" value="1"/>
</dbReference>
<dbReference type="SUPFAM" id="SSF57184">
    <property type="entry name" value="Growth factor receptor domain"/>
    <property type="match status" value="1"/>
</dbReference>
<dbReference type="SUPFAM" id="SSF100895">
    <property type="entry name" value="Kazal-type serine protease inhibitors"/>
    <property type="match status" value="1"/>
</dbReference>
<dbReference type="SUPFAM" id="SSF50156">
    <property type="entry name" value="PDZ domain-like"/>
    <property type="match status" value="1"/>
</dbReference>
<dbReference type="SUPFAM" id="SSF50494">
    <property type="entry name" value="Trypsin-like serine proteases"/>
    <property type="match status" value="1"/>
</dbReference>
<dbReference type="PROSITE" id="PS51323">
    <property type="entry name" value="IGFBP_N_2"/>
    <property type="match status" value="1"/>
</dbReference>
<dbReference type="PROSITE" id="PS51465">
    <property type="entry name" value="KAZAL_2"/>
    <property type="match status" value="1"/>
</dbReference>
<dbReference type="PROSITE" id="PS50106">
    <property type="entry name" value="PDZ"/>
    <property type="match status" value="1"/>
</dbReference>
<name>HTRA4_HUMAN</name>
<comment type="function">
    <text evidence="6">Serine protease.</text>
</comment>
<comment type="interaction">
    <interactant intactId="EBI-21776319">
        <id>P83105</id>
    </interactant>
    <interactant intactId="EBI-523958">
        <id>P55210</id>
        <label>CASP7</label>
    </interactant>
    <organismsDiffer>false</organismsDiffer>
    <experiments>6</experiments>
</comment>
<comment type="interaction">
    <interactant intactId="EBI-21776319">
        <id>P83105</id>
    </interactant>
    <interactant intactId="EBI-352256">
        <id>Q92743</id>
        <label>HTRA1</label>
    </interactant>
    <organismsDiffer>false</organismsDiffer>
    <experiments>5</experiments>
</comment>
<comment type="interaction">
    <interactant intactId="EBI-21776319">
        <id>P83105</id>
    </interactant>
    <interactant intactId="EBI-2867394">
        <id>P83110</id>
        <label>HTRA3</label>
    </interactant>
    <organismsDiffer>false</organismsDiffer>
    <experiments>5</experiments>
</comment>
<comment type="interaction">
    <interactant intactId="EBI-21776319">
        <id>P83105</id>
    </interactant>
    <interactant intactId="EBI-21776319">
        <id>P83105</id>
        <label>HTRA4</label>
    </interactant>
    <organismsDiffer>false</organismsDiffer>
    <experiments>3</experiments>
</comment>
<comment type="interaction">
    <interactant intactId="EBI-21776319">
        <id>P83105</id>
    </interactant>
    <interactant intactId="EBI-356553">
        <id>P17987</id>
        <label>TCP1</label>
    </interactant>
    <organismsDiffer>false</organismsDiffer>
    <experiments>7</experiments>
</comment>
<comment type="interaction">
    <interactant intactId="EBI-21776319">
        <id>P83105</id>
    </interactant>
    <interactant intactId="EBI-517127">
        <id>P98170</id>
        <label>XIAP</label>
    </interactant>
    <organismsDiffer>false</organismsDiffer>
    <experiments>11</experiments>
</comment>
<comment type="interaction">
    <interactant intactId="EBI-21776319">
        <id>P83105</id>
    </interactant>
    <interactant intactId="EBI-5260183">
        <id>P02666</id>
        <label>CSN2</label>
    </interactant>
    <organismsDiffer>true</organismsDiffer>
    <experiments>5</experiments>
</comment>
<comment type="subcellular location">
    <subcellularLocation>
        <location evidence="1">Secreted</location>
    </subcellularLocation>
</comment>
<comment type="similarity">
    <text evidence="6">Belongs to the peptidase S1C family.</text>
</comment>
<protein>
    <recommendedName>
        <fullName>Serine protease HTRA4</fullName>
        <ecNumber>3.4.21.-</ecNumber>
    </recommendedName>
    <alternativeName>
        <fullName>High-temperature requirement factor A4</fullName>
    </alternativeName>
</protein>
<gene>
    <name type="primary">HTRA4</name>
</gene>
<sequence length="476" mass="50979">MIRPQLRTAGLGRCLLPGLLLLLVPVLWAGAEKLHTQPSCPAVCQPTRCPALPTCALGTTPVFDLCRCCRVCPAAEREVCGGAQGQPCAPGLQCLQPLRPGFPSTCGCPTLGGAVCGSDRRTYPSMCALRAENRAARRLGKVPAVPVQWGNCGDTGTRSAGPLRRNYNFIAAVVEKVAPSVVHVQLWGRLLHGSRLVPVYSGSGFIVSEDGLIITNAHVVRNQQWIEVVLQNGARYEAVVKDIDLKLDLAVIKIESNAELPVLMLGRSSDLRAGEFVVALGSPFSLQNTATAGIVSTKQRGGKELGMKDSDMDYVQIDATINYGNSGGPLVNLDGDVIGVNSLRVTDGISFAIPSDRVRQFLAEYHEHQMKGKAFSNKKYLGLQMLSLTVPLSEELKMHYPDFPDVSSGVYVCKVVEGTAAQSSGLRDHDVIVNINGKPITTTTDVVKALDSDSLSMAVLRGKDNLLLTVIPETIN</sequence>
<proteinExistence type="evidence at protein level"/>